<dbReference type="EMBL" id="CP000414">
    <property type="protein sequence ID" value="ABJ61397.1"/>
    <property type="molecule type" value="Genomic_DNA"/>
</dbReference>
<dbReference type="RefSeq" id="WP_002815939.1">
    <property type="nucleotide sequence ID" value="NC_008531.1"/>
</dbReference>
<dbReference type="SMR" id="Q03ZH5"/>
<dbReference type="EnsemblBacteria" id="ABJ61397">
    <property type="protein sequence ID" value="ABJ61397"/>
    <property type="gene ID" value="LEUM_0270"/>
</dbReference>
<dbReference type="GeneID" id="97504906"/>
<dbReference type="KEGG" id="lme:LEUM_0270"/>
<dbReference type="eggNOG" id="COG0081">
    <property type="taxonomic scope" value="Bacteria"/>
</dbReference>
<dbReference type="HOGENOM" id="CLU_062853_0_0_9"/>
<dbReference type="Proteomes" id="UP000000362">
    <property type="component" value="Chromosome"/>
</dbReference>
<dbReference type="GO" id="GO:0015934">
    <property type="term" value="C:large ribosomal subunit"/>
    <property type="evidence" value="ECO:0007669"/>
    <property type="project" value="InterPro"/>
</dbReference>
<dbReference type="GO" id="GO:0019843">
    <property type="term" value="F:rRNA binding"/>
    <property type="evidence" value="ECO:0007669"/>
    <property type="project" value="UniProtKB-UniRule"/>
</dbReference>
<dbReference type="GO" id="GO:0003735">
    <property type="term" value="F:structural constituent of ribosome"/>
    <property type="evidence" value="ECO:0007669"/>
    <property type="project" value="InterPro"/>
</dbReference>
<dbReference type="GO" id="GO:0000049">
    <property type="term" value="F:tRNA binding"/>
    <property type="evidence" value="ECO:0007669"/>
    <property type="project" value="UniProtKB-KW"/>
</dbReference>
<dbReference type="GO" id="GO:0006417">
    <property type="term" value="P:regulation of translation"/>
    <property type="evidence" value="ECO:0007669"/>
    <property type="project" value="UniProtKB-KW"/>
</dbReference>
<dbReference type="GO" id="GO:0006412">
    <property type="term" value="P:translation"/>
    <property type="evidence" value="ECO:0007669"/>
    <property type="project" value="UniProtKB-UniRule"/>
</dbReference>
<dbReference type="CDD" id="cd00403">
    <property type="entry name" value="Ribosomal_L1"/>
    <property type="match status" value="1"/>
</dbReference>
<dbReference type="FunFam" id="3.40.50.790:FF:000001">
    <property type="entry name" value="50S ribosomal protein L1"/>
    <property type="match status" value="1"/>
</dbReference>
<dbReference type="Gene3D" id="3.30.190.20">
    <property type="match status" value="1"/>
</dbReference>
<dbReference type="Gene3D" id="3.40.50.790">
    <property type="match status" value="1"/>
</dbReference>
<dbReference type="HAMAP" id="MF_01318_B">
    <property type="entry name" value="Ribosomal_uL1_B"/>
    <property type="match status" value="1"/>
</dbReference>
<dbReference type="InterPro" id="IPR005878">
    <property type="entry name" value="Ribosom_uL1_bac-type"/>
</dbReference>
<dbReference type="InterPro" id="IPR002143">
    <property type="entry name" value="Ribosomal_uL1"/>
</dbReference>
<dbReference type="InterPro" id="IPR023674">
    <property type="entry name" value="Ribosomal_uL1-like"/>
</dbReference>
<dbReference type="InterPro" id="IPR028364">
    <property type="entry name" value="Ribosomal_uL1/biogenesis"/>
</dbReference>
<dbReference type="InterPro" id="IPR016095">
    <property type="entry name" value="Ribosomal_uL1_3-a/b-sand"/>
</dbReference>
<dbReference type="InterPro" id="IPR023673">
    <property type="entry name" value="Ribosomal_uL1_CS"/>
</dbReference>
<dbReference type="NCBIfam" id="TIGR01169">
    <property type="entry name" value="rplA_bact"/>
    <property type="match status" value="1"/>
</dbReference>
<dbReference type="PANTHER" id="PTHR36427">
    <property type="entry name" value="54S RIBOSOMAL PROTEIN L1, MITOCHONDRIAL"/>
    <property type="match status" value="1"/>
</dbReference>
<dbReference type="PANTHER" id="PTHR36427:SF3">
    <property type="entry name" value="LARGE RIBOSOMAL SUBUNIT PROTEIN UL1M"/>
    <property type="match status" value="1"/>
</dbReference>
<dbReference type="Pfam" id="PF00687">
    <property type="entry name" value="Ribosomal_L1"/>
    <property type="match status" value="1"/>
</dbReference>
<dbReference type="PIRSF" id="PIRSF002155">
    <property type="entry name" value="Ribosomal_L1"/>
    <property type="match status" value="1"/>
</dbReference>
<dbReference type="SUPFAM" id="SSF56808">
    <property type="entry name" value="Ribosomal protein L1"/>
    <property type="match status" value="1"/>
</dbReference>
<dbReference type="PROSITE" id="PS01199">
    <property type="entry name" value="RIBOSOMAL_L1"/>
    <property type="match status" value="1"/>
</dbReference>
<evidence type="ECO:0000255" key="1">
    <source>
        <dbReference type="HAMAP-Rule" id="MF_01318"/>
    </source>
</evidence>
<evidence type="ECO:0000305" key="2"/>
<reference key="1">
    <citation type="journal article" date="2006" name="Proc. Natl. Acad. Sci. U.S.A.">
        <title>Comparative genomics of the lactic acid bacteria.</title>
        <authorList>
            <person name="Makarova K.S."/>
            <person name="Slesarev A."/>
            <person name="Wolf Y.I."/>
            <person name="Sorokin A."/>
            <person name="Mirkin B."/>
            <person name="Koonin E.V."/>
            <person name="Pavlov A."/>
            <person name="Pavlova N."/>
            <person name="Karamychev V."/>
            <person name="Polouchine N."/>
            <person name="Shakhova V."/>
            <person name="Grigoriev I."/>
            <person name="Lou Y."/>
            <person name="Rohksar D."/>
            <person name="Lucas S."/>
            <person name="Huang K."/>
            <person name="Goodstein D.M."/>
            <person name="Hawkins T."/>
            <person name="Plengvidhya V."/>
            <person name="Welker D."/>
            <person name="Hughes J."/>
            <person name="Goh Y."/>
            <person name="Benson A."/>
            <person name="Baldwin K."/>
            <person name="Lee J.-H."/>
            <person name="Diaz-Muniz I."/>
            <person name="Dosti B."/>
            <person name="Smeianov V."/>
            <person name="Wechter W."/>
            <person name="Barabote R."/>
            <person name="Lorca G."/>
            <person name="Altermann E."/>
            <person name="Barrangou R."/>
            <person name="Ganesan B."/>
            <person name="Xie Y."/>
            <person name="Rawsthorne H."/>
            <person name="Tamir D."/>
            <person name="Parker C."/>
            <person name="Breidt F."/>
            <person name="Broadbent J.R."/>
            <person name="Hutkins R."/>
            <person name="O'Sullivan D."/>
            <person name="Steele J."/>
            <person name="Unlu G."/>
            <person name="Saier M.H. Jr."/>
            <person name="Klaenhammer T."/>
            <person name="Richardson P."/>
            <person name="Kozyavkin S."/>
            <person name="Weimer B.C."/>
            <person name="Mills D.A."/>
        </authorList>
    </citation>
    <scope>NUCLEOTIDE SEQUENCE [LARGE SCALE GENOMIC DNA]</scope>
    <source>
        <strain>ATCC 8293 / DSM 20343 / BCRC 11652 / CCM 1803 / JCM 6124 / NCDO 523 / NBRC 100496 / NCIMB 8023 / NCTC 12954 / NRRL B-1118 / 37Y</strain>
    </source>
</reference>
<proteinExistence type="inferred from homology"/>
<gene>
    <name evidence="1" type="primary">rplA</name>
    <name type="ordered locus">LEUM_0270</name>
</gene>
<name>RL1_LEUMM</name>
<accession>Q03ZH5</accession>
<organism>
    <name type="scientific">Leuconostoc mesenteroides subsp. mesenteroides (strain ATCC 8293 / DSM 20343 / BCRC 11652 / CCM 1803 / JCM 6124 / NCDO 523 / NBRC 100496 / NCIMB 8023 / NCTC 12954 / NRRL B-1118 / 37Y)</name>
    <dbReference type="NCBI Taxonomy" id="203120"/>
    <lineage>
        <taxon>Bacteria</taxon>
        <taxon>Bacillati</taxon>
        <taxon>Bacillota</taxon>
        <taxon>Bacilli</taxon>
        <taxon>Lactobacillales</taxon>
        <taxon>Lactobacillaceae</taxon>
        <taxon>Leuconostoc</taxon>
    </lineage>
</organism>
<sequence length="230" mass="24185">MTQKHGKNYVAAVAKVEAEKAYALNDAVSLVKEIDFAKFDASVEVVFKLNVDTRQADQQLRGAVVLPNGTGKDKTVVVFAQGDKAKEAEAAGADVVGAADLVQRIQGGWLDFDVAVATPDMMAQVGRVGRALGPKGLMPNPKTGTVTMDVTKAVSDAKGGQVTYRTDRDGNVAVPVGRVSFEEGKLAENIKSIAETVLKARPAAVKGTYVQHVSISSTFGPAVTLDINTL</sequence>
<comment type="function">
    <text evidence="1">Binds directly to 23S rRNA. The L1 stalk is quite mobile in the ribosome, and is involved in E site tRNA release.</text>
</comment>
<comment type="function">
    <text evidence="1">Protein L1 is also a translational repressor protein, it controls the translation of the L11 operon by binding to its mRNA.</text>
</comment>
<comment type="subunit">
    <text evidence="1">Part of the 50S ribosomal subunit.</text>
</comment>
<comment type="similarity">
    <text evidence="1">Belongs to the universal ribosomal protein uL1 family.</text>
</comment>
<feature type="chain" id="PRO_0000308039" description="Large ribosomal subunit protein uL1">
    <location>
        <begin position="1"/>
        <end position="230"/>
    </location>
</feature>
<protein>
    <recommendedName>
        <fullName evidence="1">Large ribosomal subunit protein uL1</fullName>
    </recommendedName>
    <alternativeName>
        <fullName evidence="2">50S ribosomal protein L1</fullName>
    </alternativeName>
</protein>
<keyword id="KW-1185">Reference proteome</keyword>
<keyword id="KW-0678">Repressor</keyword>
<keyword id="KW-0687">Ribonucleoprotein</keyword>
<keyword id="KW-0689">Ribosomal protein</keyword>
<keyword id="KW-0694">RNA-binding</keyword>
<keyword id="KW-0699">rRNA-binding</keyword>
<keyword id="KW-0810">Translation regulation</keyword>
<keyword id="KW-0820">tRNA-binding</keyword>